<feature type="chain" id="PRO_0000315943" description="Olfactory receptor 1E3">
    <location>
        <begin position="1"/>
        <end position="343"/>
    </location>
</feature>
<feature type="topological domain" description="Extracellular" evidence="1">
    <location>
        <begin position="1"/>
        <end position="28"/>
    </location>
</feature>
<feature type="transmembrane region" description="Helical; Name=1" evidence="1">
    <location>
        <begin position="29"/>
        <end position="49"/>
    </location>
</feature>
<feature type="topological domain" description="Cytoplasmic" evidence="1">
    <location>
        <begin position="50"/>
        <end position="107"/>
    </location>
</feature>
<feature type="transmembrane region" description="Helical; Name=2" evidence="1">
    <location>
        <begin position="108"/>
        <end position="128"/>
    </location>
</feature>
<feature type="topological domain" description="Extracellular" evidence="1">
    <location>
        <begin position="129"/>
        <end position="141"/>
    </location>
</feature>
<feature type="transmembrane region" description="Helical; Name=3" evidence="1">
    <location>
        <begin position="142"/>
        <end position="162"/>
    </location>
</feature>
<feature type="topological domain" description="Cytoplasmic" evidence="1">
    <location>
        <begin position="163"/>
        <end position="195"/>
    </location>
</feature>
<feature type="transmembrane region" description="Helical; Name=4" evidence="1">
    <location>
        <begin position="196"/>
        <end position="216"/>
    </location>
</feature>
<feature type="topological domain" description="Extracellular" evidence="1">
    <location>
        <begin position="217"/>
        <end position="242"/>
    </location>
</feature>
<feature type="transmembrane region" description="Helical; Name=5" evidence="1">
    <location>
        <begin position="243"/>
        <end position="263"/>
    </location>
</feature>
<feature type="topological domain" description="Cytoplasmic" evidence="1">
    <location>
        <begin position="264"/>
        <end position="271"/>
    </location>
</feature>
<feature type="transmembrane region" description="Helical; Name=6" evidence="1">
    <location>
        <begin position="272"/>
        <end position="292"/>
    </location>
</feature>
<feature type="topological domain" description="Extracellular" evidence="1">
    <location>
        <begin position="293"/>
        <end position="310"/>
    </location>
</feature>
<feature type="transmembrane region" description="Helical; Name=7" evidence="1">
    <location>
        <begin position="311"/>
        <end position="331"/>
    </location>
</feature>
<feature type="topological domain" description="Cytoplasmic" evidence="1">
    <location>
        <begin position="332"/>
        <end position="343"/>
    </location>
</feature>
<feature type="glycosylation site" description="N-linked (GlcNAc...) asparagine" evidence="1">
    <location>
        <position position="5"/>
    </location>
</feature>
<feature type="disulfide bond" evidence="2">
    <location>
        <begin position="97"/>
        <end position="179"/>
    </location>
</feature>
<feature type="sequence conflict" description="In Ref. 2; AF087929." evidence="3" ref="2">
    <original>Q</original>
    <variation>R</variation>
    <location>
        <position position="24"/>
    </location>
</feature>
<feature type="sequence conflict" description="In Ref. 3; AAA18353." evidence="3" ref="3">
    <original>CLG</original>
    <variation>WLA</variation>
    <location>
        <begin position="141"/>
        <end position="143"/>
    </location>
</feature>
<feature type="sequence conflict" description="In Ref. 3; AAA18353." evidence="3" ref="3">
    <original>AR</original>
    <variation>GS</variation>
    <location>
        <begin position="164"/>
        <end position="165"/>
    </location>
</feature>
<dbReference type="EMBL" id="AC097370">
    <property type="status" value="NOT_ANNOTATED_CDS"/>
    <property type="molecule type" value="Genomic_DNA"/>
</dbReference>
<dbReference type="EMBL" id="AF087929">
    <property type="status" value="NOT_ANNOTATED_CDS"/>
    <property type="molecule type" value="Genomic_DNA"/>
</dbReference>
<dbReference type="EMBL" id="U04690">
    <property type="protein sequence ID" value="AAA18353.1"/>
    <property type="molecule type" value="Genomic_DNA"/>
</dbReference>
<dbReference type="EMBL" id="AF399437">
    <property type="status" value="NOT_ANNOTATED_CDS"/>
    <property type="molecule type" value="Genomic_DNA"/>
</dbReference>
<dbReference type="EMBL" id="BK004549">
    <property type="status" value="NOT_ANNOTATED_CDS"/>
    <property type="molecule type" value="Genomic_DNA"/>
</dbReference>
<dbReference type="PIR" id="I38482">
    <property type="entry name" value="I38482"/>
</dbReference>
<dbReference type="SMR" id="Q8WZA6"/>
<dbReference type="FunCoup" id="Q8WZA6">
    <property type="interactions" value="107"/>
</dbReference>
<dbReference type="GlyCosmos" id="Q8WZA6">
    <property type="glycosylation" value="1 site, No reported glycans"/>
</dbReference>
<dbReference type="GlyGen" id="Q8WZA6">
    <property type="glycosylation" value="1 site"/>
</dbReference>
<dbReference type="BioMuta" id="HGNC:8191"/>
<dbReference type="DMDM" id="166215840"/>
<dbReference type="MassIVE" id="Q8WZA6"/>
<dbReference type="AGR" id="HGNC:8191"/>
<dbReference type="GeneCards" id="OR1E3"/>
<dbReference type="HGNC" id="HGNC:8191">
    <property type="gene designation" value="OR1E3"/>
</dbReference>
<dbReference type="neXtProt" id="NX_Q8WZA6"/>
<dbReference type="InParanoid" id="Q8WZA6"/>
<dbReference type="PAN-GO" id="Q8WZA6">
    <property type="GO annotations" value="3 GO annotations based on evolutionary models"/>
</dbReference>
<dbReference type="PhylomeDB" id="Q8WZA6"/>
<dbReference type="PathwayCommons" id="Q8WZA6"/>
<dbReference type="Reactome" id="R-HSA-9752946">
    <property type="pathway name" value="Expression and translocation of olfactory receptors"/>
</dbReference>
<dbReference type="Pharos" id="Q8WZA6">
    <property type="development level" value="Tdark"/>
</dbReference>
<dbReference type="PRO" id="PR:Q8WZA6"/>
<dbReference type="Proteomes" id="UP000005640">
    <property type="component" value="Unplaced"/>
</dbReference>
<dbReference type="RNAct" id="Q8WZA6">
    <property type="molecule type" value="protein"/>
</dbReference>
<dbReference type="GO" id="GO:0005886">
    <property type="term" value="C:plasma membrane"/>
    <property type="evidence" value="ECO:0000318"/>
    <property type="project" value="GO_Central"/>
</dbReference>
<dbReference type="GO" id="GO:0038022">
    <property type="term" value="F:G protein-coupled olfactory receptor activity"/>
    <property type="evidence" value="ECO:0000314"/>
    <property type="project" value="GO_Central"/>
</dbReference>
<dbReference type="GO" id="GO:0004984">
    <property type="term" value="F:olfactory receptor activity"/>
    <property type="evidence" value="ECO:0000318"/>
    <property type="project" value="GO_Central"/>
</dbReference>
<dbReference type="GO" id="GO:0007189">
    <property type="term" value="P:adenylate cyclase-activating G protein-coupled receptor signaling pathway"/>
    <property type="evidence" value="ECO:0000314"/>
    <property type="project" value="GO_Central"/>
</dbReference>
<dbReference type="GO" id="GO:0007165">
    <property type="term" value="P:signal transduction"/>
    <property type="evidence" value="ECO:0000318"/>
    <property type="project" value="GO_Central"/>
</dbReference>
<dbReference type="FunFam" id="1.20.1070.10:FF:000082">
    <property type="entry name" value="Olfactory receptor 1A1"/>
    <property type="match status" value="1"/>
</dbReference>
<dbReference type="Gene3D" id="1.20.1070.10">
    <property type="entry name" value="Rhodopsin 7-helix transmembrane proteins"/>
    <property type="match status" value="1"/>
</dbReference>
<dbReference type="InterPro" id="IPR000276">
    <property type="entry name" value="GPCR_Rhodpsn"/>
</dbReference>
<dbReference type="InterPro" id="IPR017452">
    <property type="entry name" value="GPCR_Rhodpsn_7TM"/>
</dbReference>
<dbReference type="InterPro" id="IPR000725">
    <property type="entry name" value="Olfact_rcpt"/>
</dbReference>
<dbReference type="PANTHER" id="PTHR48001">
    <property type="entry name" value="OLFACTORY RECEPTOR"/>
    <property type="match status" value="1"/>
</dbReference>
<dbReference type="Pfam" id="PF13853">
    <property type="entry name" value="7tm_4"/>
    <property type="match status" value="1"/>
</dbReference>
<dbReference type="PRINTS" id="PR00237">
    <property type="entry name" value="GPCRRHODOPSN"/>
</dbReference>
<dbReference type="PRINTS" id="PR00245">
    <property type="entry name" value="OLFACTORYR"/>
</dbReference>
<dbReference type="SUPFAM" id="SSF81321">
    <property type="entry name" value="Family A G protein-coupled receptor-like"/>
    <property type="match status" value="1"/>
</dbReference>
<dbReference type="PROSITE" id="PS50262">
    <property type="entry name" value="G_PROTEIN_RECEP_F1_2"/>
    <property type="match status" value="1"/>
</dbReference>
<accession>Q8WZA6</accession>
<comment type="function">
    <text evidence="3">Odorant receptor.</text>
</comment>
<comment type="subcellular location">
    <subcellularLocation>
        <location>Cell membrane</location>
        <topology>Multi-pass membrane protein</topology>
    </subcellularLocation>
</comment>
<comment type="polymorphism">
    <text>A single nucleotide deletion at position Leu-17 in the gene coding for this protein is responsible for functional diversity thus producing a pseudogene.</text>
</comment>
<comment type="similarity">
    <text evidence="2">Belongs to the G-protein coupled receptor 1 family.</text>
</comment>
<comment type="online information" name="Human Olfactory Receptor Data Exploratorium (HORDE)">
    <link uri="http://genome.weizmann.ac.il/horde/card/index/symbol:OR1E3P"/>
</comment>
<protein>
    <recommendedName>
        <fullName>Olfactory receptor 1E3</fullName>
    </recommendedName>
    <alternativeName>
        <fullName>Olfactory receptor 17-210</fullName>
        <shortName>OR17-210</shortName>
    </alternativeName>
    <alternativeName>
        <fullName>Olfactory receptor OR17-7</fullName>
    </alternativeName>
</protein>
<organism>
    <name type="scientific">Homo sapiens</name>
    <name type="common">Human</name>
    <dbReference type="NCBI Taxonomy" id="9606"/>
    <lineage>
        <taxon>Eukaryota</taxon>
        <taxon>Metazoa</taxon>
        <taxon>Chordata</taxon>
        <taxon>Craniata</taxon>
        <taxon>Vertebrata</taxon>
        <taxon>Euteleostomi</taxon>
        <taxon>Mammalia</taxon>
        <taxon>Eutheria</taxon>
        <taxon>Euarchontoglires</taxon>
        <taxon>Primates</taxon>
        <taxon>Haplorrhini</taxon>
        <taxon>Catarrhini</taxon>
        <taxon>Hominidae</taxon>
        <taxon>Homo</taxon>
    </lineage>
</organism>
<keyword id="KW-1003">Cell membrane</keyword>
<keyword id="KW-1015">Disulfide bond</keyword>
<keyword id="KW-0297">G-protein coupled receptor</keyword>
<keyword id="KW-0325">Glycoprotein</keyword>
<keyword id="KW-0472">Membrane</keyword>
<keyword id="KW-0552">Olfaction</keyword>
<keyword id="KW-0675">Receptor</keyword>
<keyword id="KW-1185">Reference proteome</keyword>
<keyword id="KW-0716">Sensory transduction</keyword>
<keyword id="KW-0807">Transducer</keyword>
<keyword id="KW-0812">Transmembrane</keyword>
<keyword id="KW-1133">Transmembrane helix</keyword>
<gene>
    <name type="primary">OR1E3</name>
    <name type="synonym">OR1E3P</name>
</gene>
<sequence>MMKKNQTMISEFLLLGLPIQPEQQNLFYALFLAVYLTTLLGNLLVIVLIRLDSHLHMPMYLCLSNLSFSDLCFSSVTMPKLLQNMQSQNPSIPFADCLAQMYFHLFYGVLESFLLVVMAYHCYVAICFPLHYTTIMSPKCCLGLLTLSWLLTTAHATLHTLLMARLSFCAENVIPHFFCDTSTLLKLACSNTQVNGWVMFFMGGLILVIPFLLLIMSCARIVSTILRVPSTGGIQKAFSTCGPHLSVVSLFYGTIIGLYLCPLTNHNTVKDTVMAVMYTGVTHMLNPFIYSLRNRDMRGNPGQSLQHKENFFVFKIVIVGILPLLNLVGVVKLIMKYHSKSVA</sequence>
<reference key="1">
    <citation type="journal article" date="2006" name="Nature">
        <title>DNA sequence of human chromosome 17 and analysis of rearrangement in the human lineage.</title>
        <authorList>
            <person name="Zody M.C."/>
            <person name="Garber M."/>
            <person name="Adams D.J."/>
            <person name="Sharpe T."/>
            <person name="Harrow J."/>
            <person name="Lupski J.R."/>
            <person name="Nicholson C."/>
            <person name="Searle S.M."/>
            <person name="Wilming L."/>
            <person name="Young S.K."/>
            <person name="Abouelleil A."/>
            <person name="Allen N.R."/>
            <person name="Bi W."/>
            <person name="Bloom T."/>
            <person name="Borowsky M.L."/>
            <person name="Bugalter B.E."/>
            <person name="Butler J."/>
            <person name="Chang J.L."/>
            <person name="Chen C.-K."/>
            <person name="Cook A."/>
            <person name="Corum B."/>
            <person name="Cuomo C.A."/>
            <person name="de Jong P.J."/>
            <person name="DeCaprio D."/>
            <person name="Dewar K."/>
            <person name="FitzGerald M."/>
            <person name="Gilbert J."/>
            <person name="Gibson R."/>
            <person name="Gnerre S."/>
            <person name="Goldstein S."/>
            <person name="Grafham D.V."/>
            <person name="Grocock R."/>
            <person name="Hafez N."/>
            <person name="Hagopian D.S."/>
            <person name="Hart E."/>
            <person name="Norman C.H."/>
            <person name="Humphray S."/>
            <person name="Jaffe D.B."/>
            <person name="Jones M."/>
            <person name="Kamal M."/>
            <person name="Khodiyar V.K."/>
            <person name="LaButti K."/>
            <person name="Laird G."/>
            <person name="Lehoczky J."/>
            <person name="Liu X."/>
            <person name="Lokyitsang T."/>
            <person name="Loveland J."/>
            <person name="Lui A."/>
            <person name="Macdonald P."/>
            <person name="Major J.E."/>
            <person name="Matthews L."/>
            <person name="Mauceli E."/>
            <person name="McCarroll S.A."/>
            <person name="Mihalev A.H."/>
            <person name="Mudge J."/>
            <person name="Nguyen C."/>
            <person name="Nicol R."/>
            <person name="O'Leary S.B."/>
            <person name="Osoegawa K."/>
            <person name="Schwartz D.C."/>
            <person name="Shaw-Smith C."/>
            <person name="Stankiewicz P."/>
            <person name="Steward C."/>
            <person name="Swarbreck D."/>
            <person name="Venkataraman V."/>
            <person name="Whittaker C.A."/>
            <person name="Yang X."/>
            <person name="Zimmer A.R."/>
            <person name="Bradley A."/>
            <person name="Hubbard T."/>
            <person name="Birren B.W."/>
            <person name="Rogers J."/>
            <person name="Lander E.S."/>
            <person name="Nusbaum C."/>
        </authorList>
    </citation>
    <scope>NUCLEOTIDE SEQUENCE [LARGE SCALE GENOMIC DNA]</scope>
</reference>
<reference key="2">
    <citation type="journal article" date="2000" name="Genomics">
        <title>Sequence, structure, and evolution of a complete human olfactory receptor gene cluster.</title>
        <authorList>
            <person name="Glusman G."/>
            <person name="Sosinsky A."/>
            <person name="Ben-Asher E."/>
            <person name="Avidan N."/>
            <person name="Sonkin D."/>
            <person name="Bahar A."/>
            <person name="Rosenthal A."/>
            <person name="Clifton S."/>
            <person name="Roe B."/>
            <person name="Ferraz C."/>
            <person name="Demaille J.G."/>
            <person name="Lancet D."/>
        </authorList>
    </citation>
    <scope>NUCLEOTIDE SEQUENCE [GENOMIC DNA] OF 1-317</scope>
</reference>
<reference key="3">
    <citation type="journal article" date="1994" name="Hum. Mol. Genet.">
        <title>Olfactory receptor gene cluster on human chromosome 17: possible duplication of an ancestral receptor repertoire.</title>
        <authorList>
            <person name="Ben-Arie N."/>
            <person name="Lancet D."/>
            <person name="Taylor C."/>
            <person name="Khen M."/>
            <person name="Walker N."/>
            <person name="Ledbetter D.H."/>
            <person name="Carrozzo R."/>
            <person name="Patel K."/>
            <person name="Sheer D."/>
            <person name="Lehrach H."/>
            <person name="North M.A."/>
        </authorList>
    </citation>
    <scope>NUCLEOTIDE SEQUENCE [GENOMIC DNA] OF 68-283</scope>
</reference>
<reference key="4">
    <citation type="journal article" date="2002" name="Genomics">
        <title>DEFOG: a practical scheme for deciphering families of genes.</title>
        <authorList>
            <person name="Fuchs T."/>
            <person name="Malecova B."/>
            <person name="Linhart C."/>
            <person name="Sharan R."/>
            <person name="Khen M."/>
            <person name="Herwig R."/>
            <person name="Shmulevich D."/>
            <person name="Elkon R."/>
            <person name="Steinfath M."/>
            <person name="O'Brien J.K."/>
            <person name="Radelof U."/>
            <person name="Lehrach H."/>
            <person name="Lancet D."/>
            <person name="Shamir R."/>
        </authorList>
    </citation>
    <scope>NUCLEOTIDE SEQUENCE [GENOMIC DNA] OF 68-283</scope>
</reference>
<reference key="5">
    <citation type="journal article" date="2004" name="Proc. Natl. Acad. Sci. U.S.A.">
        <title>The human olfactory receptor gene family.</title>
        <authorList>
            <person name="Malnic B."/>
            <person name="Godfrey P.A."/>
            <person name="Buck L.B."/>
        </authorList>
    </citation>
    <scope>IDENTIFICATION</scope>
</reference>
<reference key="6">
    <citation type="journal article" date="2004" name="Proc. Natl. Acad. Sci. U.S.A.">
        <authorList>
            <person name="Malnic B."/>
            <person name="Godfrey P.A."/>
            <person name="Buck L.B."/>
        </authorList>
    </citation>
    <scope>ERRATUM OF PUBMED:14983052</scope>
</reference>
<reference key="7">
    <citation type="journal article" date="2003" name="Nat. Genet.">
        <title>Different noses for different people.</title>
        <authorList>
            <person name="Menashe I."/>
            <person name="Man O."/>
            <person name="Lancet D."/>
            <person name="Gilad Y."/>
        </authorList>
    </citation>
    <scope>POLYMORPHISM</scope>
</reference>
<proteinExistence type="inferred from homology"/>
<name>OR1E3_HUMAN</name>
<evidence type="ECO:0000255" key="1"/>
<evidence type="ECO:0000255" key="2">
    <source>
        <dbReference type="PROSITE-ProRule" id="PRU00521"/>
    </source>
</evidence>
<evidence type="ECO:0000305" key="3"/>